<protein>
    <recommendedName>
        <fullName evidence="1">Isoprenyl transferase</fullName>
        <ecNumber evidence="1">2.5.1.-</ecNumber>
    </recommendedName>
</protein>
<accession>Q5L6U0</accession>
<gene>
    <name evidence="1" type="primary">uppS</name>
    <name type="ordered locus">CAB173</name>
</gene>
<feature type="chain" id="PRO_0000123591" description="Isoprenyl transferase">
    <location>
        <begin position="1"/>
        <end position="250"/>
    </location>
</feature>
<feature type="active site" evidence="1">
    <location>
        <position position="27"/>
    </location>
</feature>
<feature type="active site" description="Proton acceptor" evidence="1">
    <location>
        <position position="79"/>
    </location>
</feature>
<feature type="binding site" evidence="1">
    <location>
        <position position="27"/>
    </location>
    <ligand>
        <name>Mg(2+)</name>
        <dbReference type="ChEBI" id="CHEBI:18420"/>
    </ligand>
</feature>
<feature type="binding site" evidence="1">
    <location>
        <begin position="28"/>
        <end position="31"/>
    </location>
    <ligand>
        <name>substrate</name>
    </ligand>
</feature>
<feature type="binding site" evidence="1">
    <location>
        <position position="32"/>
    </location>
    <ligand>
        <name>substrate</name>
    </ligand>
</feature>
<feature type="binding site" evidence="1">
    <location>
        <position position="48"/>
    </location>
    <ligand>
        <name>substrate</name>
    </ligand>
</feature>
<feature type="binding site" evidence="1">
    <location>
        <begin position="76"/>
        <end position="78"/>
    </location>
    <ligand>
        <name>substrate</name>
    </ligand>
</feature>
<feature type="binding site" evidence="1">
    <location>
        <position position="80"/>
    </location>
    <ligand>
        <name>substrate</name>
    </ligand>
</feature>
<feature type="binding site" evidence="1">
    <location>
        <position position="82"/>
    </location>
    <ligand>
        <name>substrate</name>
    </ligand>
</feature>
<feature type="binding site" evidence="1">
    <location>
        <position position="199"/>
    </location>
    <ligand>
        <name>substrate</name>
    </ligand>
</feature>
<feature type="binding site" evidence="1">
    <location>
        <begin position="205"/>
        <end position="207"/>
    </location>
    <ligand>
        <name>substrate</name>
    </ligand>
</feature>
<feature type="binding site" evidence="1">
    <location>
        <position position="218"/>
    </location>
    <ligand>
        <name>Mg(2+)</name>
        <dbReference type="ChEBI" id="CHEBI:18420"/>
    </ligand>
</feature>
<reference key="1">
    <citation type="journal article" date="2005" name="Genome Res.">
        <title>The Chlamydophila abortus genome sequence reveals an array of variable proteins that contribute to interspecies variation.</title>
        <authorList>
            <person name="Thomson N.R."/>
            <person name="Yeats C."/>
            <person name="Bell K."/>
            <person name="Holden M.T.G."/>
            <person name="Bentley S.D."/>
            <person name="Livingstone M."/>
            <person name="Cerdeno-Tarraga A.-M."/>
            <person name="Harris B."/>
            <person name="Doggett J."/>
            <person name="Ormond D."/>
            <person name="Mungall K."/>
            <person name="Clarke K."/>
            <person name="Feltwell T."/>
            <person name="Hance Z."/>
            <person name="Sanders M."/>
            <person name="Quail M.A."/>
            <person name="Price C."/>
            <person name="Barrell B.G."/>
            <person name="Parkhill J."/>
            <person name="Longbottom D."/>
        </authorList>
    </citation>
    <scope>NUCLEOTIDE SEQUENCE [LARGE SCALE GENOMIC DNA]</scope>
    <source>
        <strain>DSM 27085 / S26/3</strain>
    </source>
</reference>
<sequence>MSLTLKQADQASLSMQSLPKHVAIIMDGNRRWYRQHQAQCSIKSSSGHYYGAKVLPNIIESAFSLGIEVLTLFAFSTENFLRSAEEVAELFSLFHAQLDEQLPYLIENKIRLRCIGNLLALPPDLQQQIAKVASETQRHGMRELVLAINYGGKDELVRAFKKLHHDLVNKKISLDSVSEELIRLYLDTSEIPDPDLLIRTGGEMRVSNFLLWQIAYTELYVTDVLWPDFKPYHLLDAIKAYQHRSRRGGK</sequence>
<dbReference type="EC" id="2.5.1.-" evidence="1"/>
<dbReference type="EMBL" id="CR848038">
    <property type="protein sequence ID" value="CAH63631.1"/>
    <property type="molecule type" value="Genomic_DNA"/>
</dbReference>
<dbReference type="RefSeq" id="WP_011096878.1">
    <property type="nucleotide sequence ID" value="NC_004552.2"/>
</dbReference>
<dbReference type="SMR" id="Q5L6U0"/>
<dbReference type="GeneID" id="93024728"/>
<dbReference type="KEGG" id="cab:CAB173"/>
<dbReference type="eggNOG" id="COG0020">
    <property type="taxonomic scope" value="Bacteria"/>
</dbReference>
<dbReference type="HOGENOM" id="CLU_038505_1_1_0"/>
<dbReference type="OrthoDB" id="4191603at2"/>
<dbReference type="Proteomes" id="UP000001012">
    <property type="component" value="Chromosome"/>
</dbReference>
<dbReference type="GO" id="GO:0045547">
    <property type="term" value="F:ditrans,polycis-polyprenyl diphosphate synthase [(2E,6E)-farnesyl diphosphate specific] activity"/>
    <property type="evidence" value="ECO:0007669"/>
    <property type="project" value="TreeGrafter"/>
</dbReference>
<dbReference type="GO" id="GO:0000287">
    <property type="term" value="F:magnesium ion binding"/>
    <property type="evidence" value="ECO:0007669"/>
    <property type="project" value="UniProtKB-UniRule"/>
</dbReference>
<dbReference type="GO" id="GO:0016094">
    <property type="term" value="P:polyprenol biosynthetic process"/>
    <property type="evidence" value="ECO:0007669"/>
    <property type="project" value="TreeGrafter"/>
</dbReference>
<dbReference type="CDD" id="cd00475">
    <property type="entry name" value="Cis_IPPS"/>
    <property type="match status" value="1"/>
</dbReference>
<dbReference type="FunFam" id="3.40.1180.10:FF:000001">
    <property type="entry name" value="(2E,6E)-farnesyl-diphosphate-specific ditrans,polycis-undecaprenyl-diphosphate synthase"/>
    <property type="match status" value="1"/>
</dbReference>
<dbReference type="Gene3D" id="3.40.1180.10">
    <property type="entry name" value="Decaprenyl diphosphate synthase-like"/>
    <property type="match status" value="1"/>
</dbReference>
<dbReference type="HAMAP" id="MF_01139">
    <property type="entry name" value="ISPT"/>
    <property type="match status" value="1"/>
</dbReference>
<dbReference type="InterPro" id="IPR001441">
    <property type="entry name" value="UPP_synth-like"/>
</dbReference>
<dbReference type="InterPro" id="IPR018520">
    <property type="entry name" value="UPP_synth-like_CS"/>
</dbReference>
<dbReference type="InterPro" id="IPR036424">
    <property type="entry name" value="UPP_synth-like_sf"/>
</dbReference>
<dbReference type="NCBIfam" id="NF011413">
    <property type="entry name" value="PRK14840.1"/>
    <property type="match status" value="1"/>
</dbReference>
<dbReference type="NCBIfam" id="TIGR00055">
    <property type="entry name" value="uppS"/>
    <property type="match status" value="1"/>
</dbReference>
<dbReference type="PANTHER" id="PTHR10291:SF0">
    <property type="entry name" value="DEHYDRODOLICHYL DIPHOSPHATE SYNTHASE 2"/>
    <property type="match status" value="1"/>
</dbReference>
<dbReference type="PANTHER" id="PTHR10291">
    <property type="entry name" value="DEHYDRODOLICHYL DIPHOSPHATE SYNTHASE FAMILY MEMBER"/>
    <property type="match status" value="1"/>
</dbReference>
<dbReference type="Pfam" id="PF01255">
    <property type="entry name" value="Prenyltransf"/>
    <property type="match status" value="1"/>
</dbReference>
<dbReference type="SUPFAM" id="SSF64005">
    <property type="entry name" value="Undecaprenyl diphosphate synthase"/>
    <property type="match status" value="1"/>
</dbReference>
<dbReference type="PROSITE" id="PS01066">
    <property type="entry name" value="UPP_SYNTHASE"/>
    <property type="match status" value="1"/>
</dbReference>
<organism>
    <name type="scientific">Chlamydia abortus (strain DSM 27085 / S26/3)</name>
    <name type="common">Chlamydophila abortus</name>
    <dbReference type="NCBI Taxonomy" id="218497"/>
    <lineage>
        <taxon>Bacteria</taxon>
        <taxon>Pseudomonadati</taxon>
        <taxon>Chlamydiota</taxon>
        <taxon>Chlamydiia</taxon>
        <taxon>Chlamydiales</taxon>
        <taxon>Chlamydiaceae</taxon>
        <taxon>Chlamydia/Chlamydophila group</taxon>
        <taxon>Chlamydia</taxon>
    </lineage>
</organism>
<comment type="function">
    <text evidence="1">Catalyzes the condensation of isopentenyl diphosphate (IPP) with allylic pyrophosphates generating different type of terpenoids.</text>
</comment>
<comment type="cofactor">
    <cofactor evidence="1">
        <name>Mg(2+)</name>
        <dbReference type="ChEBI" id="CHEBI:18420"/>
    </cofactor>
    <text evidence="1">Binds 2 magnesium ions per subunit.</text>
</comment>
<comment type="subunit">
    <text evidence="1">Homodimer.</text>
</comment>
<comment type="similarity">
    <text evidence="1">Belongs to the UPP synthase family.</text>
</comment>
<keyword id="KW-0460">Magnesium</keyword>
<keyword id="KW-0479">Metal-binding</keyword>
<keyword id="KW-0808">Transferase</keyword>
<proteinExistence type="inferred from homology"/>
<evidence type="ECO:0000255" key="1">
    <source>
        <dbReference type="HAMAP-Rule" id="MF_01139"/>
    </source>
</evidence>
<name>ISPT_CHLAB</name>